<reference key="1">
    <citation type="journal article" date="2009" name="Mol. Biol. Evol.">
        <title>Molecular evolution, functional variation, and proposed nomenclature of the gene family that includes sphingomyelinase D in sicariid spider venoms.</title>
        <authorList>
            <person name="Binford G.J."/>
            <person name="Bodner M.R."/>
            <person name="Cordes M.H."/>
            <person name="Baldwin K.L."/>
            <person name="Rynerson M.R."/>
            <person name="Burns S.N."/>
            <person name="Zobel-Thropp P.A."/>
        </authorList>
    </citation>
    <scope>NUCLEOTIDE SEQUENCE [MRNA]</scope>
    <scope>NOMENCLATURE</scope>
    <source>
        <tissue>Venom gland</tissue>
    </source>
</reference>
<accession>C0JB20</accession>
<dbReference type="EC" id="4.6.1.-" evidence="4"/>
<dbReference type="EMBL" id="FJ171455">
    <property type="protein sequence ID" value="ACN48951.1"/>
    <property type="molecule type" value="mRNA"/>
</dbReference>
<dbReference type="SMR" id="C0JB20"/>
<dbReference type="GO" id="GO:0005576">
    <property type="term" value="C:extracellular region"/>
    <property type="evidence" value="ECO:0007669"/>
    <property type="project" value="UniProtKB-SubCell"/>
</dbReference>
<dbReference type="GO" id="GO:0016829">
    <property type="term" value="F:lyase activity"/>
    <property type="evidence" value="ECO:0007669"/>
    <property type="project" value="UniProtKB-KW"/>
</dbReference>
<dbReference type="GO" id="GO:0046872">
    <property type="term" value="F:metal ion binding"/>
    <property type="evidence" value="ECO:0007669"/>
    <property type="project" value="UniProtKB-KW"/>
</dbReference>
<dbReference type="GO" id="GO:0008081">
    <property type="term" value="F:phosphoric diester hydrolase activity"/>
    <property type="evidence" value="ECO:0007669"/>
    <property type="project" value="InterPro"/>
</dbReference>
<dbReference type="GO" id="GO:0090729">
    <property type="term" value="F:toxin activity"/>
    <property type="evidence" value="ECO:0007669"/>
    <property type="project" value="UniProtKB-KW"/>
</dbReference>
<dbReference type="GO" id="GO:0031640">
    <property type="term" value="P:killing of cells of another organism"/>
    <property type="evidence" value="ECO:0007669"/>
    <property type="project" value="UniProtKB-KW"/>
</dbReference>
<dbReference type="GO" id="GO:0016042">
    <property type="term" value="P:lipid catabolic process"/>
    <property type="evidence" value="ECO:0007669"/>
    <property type="project" value="UniProtKB-KW"/>
</dbReference>
<dbReference type="CDD" id="cd08576">
    <property type="entry name" value="GDPD_like_SMaseD_PLD"/>
    <property type="match status" value="1"/>
</dbReference>
<dbReference type="Gene3D" id="3.20.20.190">
    <property type="entry name" value="Phosphatidylinositol (PI) phosphodiesterase"/>
    <property type="match status" value="1"/>
</dbReference>
<dbReference type="InterPro" id="IPR017946">
    <property type="entry name" value="PLC-like_Pdiesterase_TIM-brl"/>
</dbReference>
<dbReference type="SUPFAM" id="SSF51695">
    <property type="entry name" value="PLC-like phosphodiesterases"/>
    <property type="match status" value="1"/>
</dbReference>
<name>A413_LOXAM</name>
<evidence type="ECO:0000250" key="1">
    <source>
        <dbReference type="UniProtKB" id="A0A0D4WTV1"/>
    </source>
</evidence>
<evidence type="ECO:0000250" key="2">
    <source>
        <dbReference type="UniProtKB" id="A0A0D4WV12"/>
    </source>
</evidence>
<evidence type="ECO:0000250" key="3">
    <source>
        <dbReference type="UniProtKB" id="P0CE80"/>
    </source>
</evidence>
<evidence type="ECO:0000250" key="4">
    <source>
        <dbReference type="UniProtKB" id="Q4ZFU2"/>
    </source>
</evidence>
<evidence type="ECO:0000250" key="5">
    <source>
        <dbReference type="UniProtKB" id="Q8I914"/>
    </source>
</evidence>
<evidence type="ECO:0000303" key="6">
    <source>
    </source>
</evidence>
<evidence type="ECO:0000305" key="7"/>
<evidence type="ECO:0000305" key="8">
    <source>
    </source>
</evidence>
<feature type="chain" id="PRO_0000392835" description="Dermonecrotic toxin LamSicTox-alphaIV1iii">
    <location>
        <begin position="1" status="less than"/>
        <end position="275"/>
    </location>
</feature>
<feature type="active site" evidence="5">
    <location>
        <position position="5"/>
    </location>
</feature>
<feature type="active site" description="Nucleophile" evidence="5">
    <location>
        <position position="41"/>
    </location>
</feature>
<feature type="binding site" evidence="5">
    <location>
        <position position="25"/>
    </location>
    <ligand>
        <name>Mg(2+)</name>
        <dbReference type="ChEBI" id="CHEBI:18420"/>
    </ligand>
</feature>
<feature type="binding site" evidence="5">
    <location>
        <position position="27"/>
    </location>
    <ligand>
        <name>Mg(2+)</name>
        <dbReference type="ChEBI" id="CHEBI:18420"/>
    </ligand>
</feature>
<feature type="binding site" evidence="5">
    <location>
        <position position="85"/>
    </location>
    <ligand>
        <name>Mg(2+)</name>
        <dbReference type="ChEBI" id="CHEBI:18420"/>
    </ligand>
</feature>
<feature type="disulfide bond" evidence="3">
    <location>
        <begin position="45"/>
        <end position="51"/>
    </location>
</feature>
<feature type="disulfide bond" evidence="3">
    <location>
        <begin position="47"/>
        <end position="192"/>
    </location>
</feature>
<feature type="non-terminal residue">
    <location>
        <position position="1"/>
    </location>
</feature>
<protein>
    <recommendedName>
        <fullName evidence="6">Dermonecrotic toxin LamSicTox-alphaIV1iii</fullName>
        <ecNumber evidence="4">4.6.1.-</ecNumber>
    </recommendedName>
    <alternativeName>
        <fullName>Phospholipase D</fullName>
        <shortName>PLD</shortName>
    </alternativeName>
    <alternativeName>
        <fullName>Sphingomyelin phosphodiesterase D</fullName>
        <shortName>SMD</shortName>
        <shortName>SMase D</shortName>
        <shortName>Sphingomyelinase D</shortName>
    </alternativeName>
</protein>
<comment type="function">
    <text evidence="1 3">Dermonecrotic toxins cleave the phosphodiester linkage between the phosphate and headgroup of certain phospholipids (sphingolipid and lysolipid substrates), forming an alcohol (often choline) and a cyclic phosphate (By similarity). This toxin acts on sphingomyelin (SM) (By similarity). It may also act on ceramide phosphoethanolamine (CPE), lysophosphatidylcholine (LPC) and lysophosphatidylethanolamine (LPE), but not on lysophosphatidylserine (LPS), and lysophosphatidylglycerol (LPG) (By similarity). It acts by transphosphatidylation, releasing exclusively cyclic phosphate products as second products (By similarity). Induces dermonecrosis, hemolysis, increased vascular permeability, edema, inflammatory response, and platelet aggregation (By similarity).</text>
</comment>
<comment type="catalytic activity">
    <reaction evidence="1">
        <text>an N-(acyl)-sphingosylphosphocholine = an N-(acyl)-sphingosyl-1,3-cyclic phosphate + choline</text>
        <dbReference type="Rhea" id="RHEA:60652"/>
        <dbReference type="ChEBI" id="CHEBI:15354"/>
        <dbReference type="ChEBI" id="CHEBI:64583"/>
        <dbReference type="ChEBI" id="CHEBI:143892"/>
    </reaction>
</comment>
<comment type="catalytic activity">
    <reaction evidence="1">
        <text>an N-(acyl)-sphingosylphosphoethanolamine = an N-(acyl)-sphingosyl-1,3-cyclic phosphate + ethanolamine</text>
        <dbReference type="Rhea" id="RHEA:60648"/>
        <dbReference type="ChEBI" id="CHEBI:57603"/>
        <dbReference type="ChEBI" id="CHEBI:143891"/>
        <dbReference type="ChEBI" id="CHEBI:143892"/>
    </reaction>
</comment>
<comment type="catalytic activity">
    <reaction evidence="1">
        <text>a 1-acyl-sn-glycero-3-phosphocholine = a 1-acyl-sn-glycero-2,3-cyclic phosphate + choline</text>
        <dbReference type="Rhea" id="RHEA:60700"/>
        <dbReference type="ChEBI" id="CHEBI:15354"/>
        <dbReference type="ChEBI" id="CHEBI:58168"/>
        <dbReference type="ChEBI" id="CHEBI:143947"/>
    </reaction>
</comment>
<comment type="catalytic activity">
    <reaction evidence="1">
        <text>a 1-acyl-sn-glycero-3-phosphoethanolamine = a 1-acyl-sn-glycero-2,3-cyclic phosphate + ethanolamine</text>
        <dbReference type="Rhea" id="RHEA:60704"/>
        <dbReference type="ChEBI" id="CHEBI:57603"/>
        <dbReference type="ChEBI" id="CHEBI:64381"/>
        <dbReference type="ChEBI" id="CHEBI:143947"/>
    </reaction>
</comment>
<comment type="cofactor">
    <cofactor evidence="5">
        <name>Mg(2+)</name>
        <dbReference type="ChEBI" id="CHEBI:18420"/>
    </cofactor>
    <text evidence="5">Binds 1 Mg(2+) ion per subunit.</text>
</comment>
<comment type="subcellular location">
    <subcellularLocation>
        <location evidence="8">Secreted</location>
    </subcellularLocation>
</comment>
<comment type="tissue specificity">
    <text evidence="8">Expressed by the venom gland.</text>
</comment>
<comment type="similarity">
    <text evidence="7">Belongs to the arthropod phospholipase D family. Class II subfamily.</text>
</comment>
<comment type="caution">
    <text evidence="1 2 4">The most common activity assay for dermonecrotic toxins detects enzymatic activity by monitoring choline release from substrate. Liberation of choline from sphingomyelin (SM) or lysophosphatidylcholine (LPC) is commonly assumed to result from substrate hydrolysis, giving either ceramide-1-phosphate (C1P) or lysophosphatidic acid (LPA), respectively, as a second product. However, two studies from Lajoie and colleagues (2013 and 2015) report the observation of exclusive formation of cyclic phosphate products as second products, resulting from intramolecular transphosphatidylation. Cyclic phosphates have vastly different biological properties from their monoester counterparts, and they may be relevant to the pathology of brown spider envenomation.</text>
</comment>
<organism>
    <name type="scientific">Loxosceles amazonica</name>
    <name type="common">Recluse spider</name>
    <dbReference type="NCBI Taxonomy" id="571517"/>
    <lineage>
        <taxon>Eukaryota</taxon>
        <taxon>Metazoa</taxon>
        <taxon>Ecdysozoa</taxon>
        <taxon>Arthropoda</taxon>
        <taxon>Chelicerata</taxon>
        <taxon>Arachnida</taxon>
        <taxon>Araneae</taxon>
        <taxon>Araneomorphae</taxon>
        <taxon>Haplogynae</taxon>
        <taxon>Scytodoidea</taxon>
        <taxon>Sicariidae</taxon>
        <taxon>Loxosceles</taxon>
    </lineage>
</organism>
<sequence>WIMGHMVNEIYQIDEFVDLGANSIETDITFDDDAMAEYSYHGVPCGCMRWCHKWEYVNDFLEGLRRATTPGDSKYRKQLILVVFDLKTGDLSSSTAYKGGKLFAEKLLRYYWNGGSNGGRAYIIISIPDIDHYAFISGFRDALKKSGHEDLLAKVGYDFSGNDDLNSIRSALHKAGVKDREHVWQSDGITNCLLRSLDRVNEAVKNRDSSNGYISKMYYWTIEKYATVRDALNAEVDGIMTNYPDVIVNVLNEDSFKNRFRMATFDDNPWELFKR</sequence>
<keyword id="KW-0204">Cytolysis</keyword>
<keyword id="KW-1061">Dermonecrotic toxin</keyword>
<keyword id="KW-1015">Disulfide bond</keyword>
<keyword id="KW-0354">Hemolysis</keyword>
<keyword id="KW-0442">Lipid degradation</keyword>
<keyword id="KW-0443">Lipid metabolism</keyword>
<keyword id="KW-0456">Lyase</keyword>
<keyword id="KW-0460">Magnesium</keyword>
<keyword id="KW-0479">Metal-binding</keyword>
<keyword id="KW-0964">Secreted</keyword>
<keyword id="KW-0800">Toxin</keyword>
<proteinExistence type="evidence at transcript level"/>